<name>RL18_SHEB9</name>
<organism>
    <name type="scientific">Shewanella baltica (strain OS195)</name>
    <dbReference type="NCBI Taxonomy" id="399599"/>
    <lineage>
        <taxon>Bacteria</taxon>
        <taxon>Pseudomonadati</taxon>
        <taxon>Pseudomonadota</taxon>
        <taxon>Gammaproteobacteria</taxon>
        <taxon>Alteromonadales</taxon>
        <taxon>Shewanellaceae</taxon>
        <taxon>Shewanella</taxon>
    </lineage>
</organism>
<protein>
    <recommendedName>
        <fullName evidence="1">Large ribosomal subunit protein uL18</fullName>
    </recommendedName>
    <alternativeName>
        <fullName evidence="2">50S ribosomal protein L18</fullName>
    </alternativeName>
</protein>
<proteinExistence type="inferred from homology"/>
<comment type="function">
    <text evidence="1">This is one of the proteins that bind and probably mediate the attachment of the 5S RNA into the large ribosomal subunit, where it forms part of the central protuberance.</text>
</comment>
<comment type="subunit">
    <text evidence="1">Part of the 50S ribosomal subunit; part of the 5S rRNA/L5/L18/L25 subcomplex. Contacts the 5S and 23S rRNAs.</text>
</comment>
<comment type="similarity">
    <text evidence="1">Belongs to the universal ribosomal protein uL18 family.</text>
</comment>
<evidence type="ECO:0000255" key="1">
    <source>
        <dbReference type="HAMAP-Rule" id="MF_01337"/>
    </source>
</evidence>
<evidence type="ECO:0000305" key="2"/>
<feature type="chain" id="PRO_1000086685" description="Large ribosomal subunit protein uL18">
    <location>
        <begin position="1"/>
        <end position="116"/>
    </location>
</feature>
<reference key="1">
    <citation type="submission" date="2007-11" db="EMBL/GenBank/DDBJ databases">
        <title>Complete sequence of chromosome of Shewanella baltica OS195.</title>
        <authorList>
            <consortium name="US DOE Joint Genome Institute"/>
            <person name="Copeland A."/>
            <person name="Lucas S."/>
            <person name="Lapidus A."/>
            <person name="Barry K."/>
            <person name="Glavina del Rio T."/>
            <person name="Dalin E."/>
            <person name="Tice H."/>
            <person name="Pitluck S."/>
            <person name="Chain P."/>
            <person name="Malfatti S."/>
            <person name="Shin M."/>
            <person name="Vergez L."/>
            <person name="Schmutz J."/>
            <person name="Larimer F."/>
            <person name="Land M."/>
            <person name="Hauser L."/>
            <person name="Kyrpides N."/>
            <person name="Kim E."/>
            <person name="Brettar I."/>
            <person name="Rodrigues J."/>
            <person name="Konstantinidis K."/>
            <person name="Klappenbach J."/>
            <person name="Hofle M."/>
            <person name="Tiedje J."/>
            <person name="Richardson P."/>
        </authorList>
    </citation>
    <scope>NUCLEOTIDE SEQUENCE [LARGE SCALE GENOMIC DNA]</scope>
    <source>
        <strain>OS195</strain>
    </source>
</reference>
<keyword id="KW-0687">Ribonucleoprotein</keyword>
<keyword id="KW-0689">Ribosomal protein</keyword>
<keyword id="KW-0694">RNA-binding</keyword>
<keyword id="KW-0699">rRNA-binding</keyword>
<gene>
    <name evidence="1" type="primary">rplR</name>
    <name type="ordered locus">Sbal195_0216</name>
</gene>
<accession>A9KWB8</accession>
<dbReference type="EMBL" id="CP000891">
    <property type="protein sequence ID" value="ABX47398.1"/>
    <property type="molecule type" value="Genomic_DNA"/>
</dbReference>
<dbReference type="RefSeq" id="WP_006083584.1">
    <property type="nucleotide sequence ID" value="NC_009997.1"/>
</dbReference>
<dbReference type="SMR" id="A9KWB8"/>
<dbReference type="GeneID" id="11770572"/>
<dbReference type="KEGG" id="sbn:Sbal195_0216"/>
<dbReference type="HOGENOM" id="CLU_098841_0_1_6"/>
<dbReference type="Proteomes" id="UP000000770">
    <property type="component" value="Chromosome"/>
</dbReference>
<dbReference type="GO" id="GO:0022625">
    <property type="term" value="C:cytosolic large ribosomal subunit"/>
    <property type="evidence" value="ECO:0007669"/>
    <property type="project" value="TreeGrafter"/>
</dbReference>
<dbReference type="GO" id="GO:0008097">
    <property type="term" value="F:5S rRNA binding"/>
    <property type="evidence" value="ECO:0007669"/>
    <property type="project" value="TreeGrafter"/>
</dbReference>
<dbReference type="GO" id="GO:0003735">
    <property type="term" value="F:structural constituent of ribosome"/>
    <property type="evidence" value="ECO:0007669"/>
    <property type="project" value="InterPro"/>
</dbReference>
<dbReference type="GO" id="GO:0006412">
    <property type="term" value="P:translation"/>
    <property type="evidence" value="ECO:0007669"/>
    <property type="project" value="UniProtKB-UniRule"/>
</dbReference>
<dbReference type="CDD" id="cd00432">
    <property type="entry name" value="Ribosomal_L18_L5e"/>
    <property type="match status" value="1"/>
</dbReference>
<dbReference type="FunFam" id="3.30.420.100:FF:000001">
    <property type="entry name" value="50S ribosomal protein L18"/>
    <property type="match status" value="1"/>
</dbReference>
<dbReference type="Gene3D" id="3.30.420.100">
    <property type="match status" value="1"/>
</dbReference>
<dbReference type="HAMAP" id="MF_01337_B">
    <property type="entry name" value="Ribosomal_uL18_B"/>
    <property type="match status" value="1"/>
</dbReference>
<dbReference type="InterPro" id="IPR004389">
    <property type="entry name" value="Ribosomal_uL18_bac-type"/>
</dbReference>
<dbReference type="InterPro" id="IPR005484">
    <property type="entry name" value="Ribosomal_uL18_bac/euk"/>
</dbReference>
<dbReference type="NCBIfam" id="TIGR00060">
    <property type="entry name" value="L18_bact"/>
    <property type="match status" value="1"/>
</dbReference>
<dbReference type="PANTHER" id="PTHR12899">
    <property type="entry name" value="39S RIBOSOMAL PROTEIN L18, MITOCHONDRIAL"/>
    <property type="match status" value="1"/>
</dbReference>
<dbReference type="PANTHER" id="PTHR12899:SF3">
    <property type="entry name" value="LARGE RIBOSOMAL SUBUNIT PROTEIN UL18M"/>
    <property type="match status" value="1"/>
</dbReference>
<dbReference type="Pfam" id="PF00861">
    <property type="entry name" value="Ribosomal_L18p"/>
    <property type="match status" value="1"/>
</dbReference>
<dbReference type="SUPFAM" id="SSF53137">
    <property type="entry name" value="Translational machinery components"/>
    <property type="match status" value="1"/>
</dbReference>
<sequence>MDKKTSRLRRATRARKKIQELGVNRLVVHRTPRHIYAQVINPEAQVLAAASTVEKAVKELLKSTGNVDAAKAVGKFVAERAIEKGVTSVAFDRSGFKYHGRVAALADAAREAGLKF</sequence>